<comment type="function">
    <text evidence="1">Component of the cytochrome b6-f complex, which mediates electron transfer between photosystem II (PSII) and photosystem I (PSI), cyclic electron flow around PSI, and state transitions.</text>
</comment>
<comment type="subunit">
    <text evidence="1">The 4 large subunits of the cytochrome b6-f complex are cytochrome b6, subunit IV (17 kDa polypeptide, PetD), cytochrome f and the Rieske protein, while the 4 small subunits are PetG, PetL, PetM and PetN. The complex functions as a dimer.</text>
</comment>
<comment type="subcellular location">
    <subcellularLocation>
        <location evidence="1">Plastid</location>
        <location evidence="1">Chloroplast thylakoid membrane</location>
        <topology evidence="1">Single-pass membrane protein</topology>
    </subcellularLocation>
</comment>
<comment type="similarity">
    <text evidence="1">Belongs to the PetN family.</text>
</comment>
<dbReference type="EMBL" id="AY818926">
    <property type="protein sequence ID" value="AAW33077.1"/>
    <property type="molecule type" value="Genomic_DNA"/>
</dbReference>
<dbReference type="RefSeq" id="YP_010544699.1">
    <property type="nucleotide sequence ID" value="NC_068049.1"/>
</dbReference>
<dbReference type="SMR" id="Q5IBK4"/>
<dbReference type="GeneID" id="76359175"/>
<dbReference type="GO" id="GO:0009535">
    <property type="term" value="C:chloroplast thylakoid membrane"/>
    <property type="evidence" value="ECO:0007669"/>
    <property type="project" value="UniProtKB-SubCell"/>
</dbReference>
<dbReference type="GO" id="GO:0009512">
    <property type="term" value="C:cytochrome b6f complex"/>
    <property type="evidence" value="ECO:0007669"/>
    <property type="project" value="InterPro"/>
</dbReference>
<dbReference type="GO" id="GO:0045158">
    <property type="term" value="F:electron transporter, transferring electrons within cytochrome b6/f complex of photosystem II activity"/>
    <property type="evidence" value="ECO:0007669"/>
    <property type="project" value="InterPro"/>
</dbReference>
<dbReference type="GO" id="GO:0017004">
    <property type="term" value="P:cytochrome complex assembly"/>
    <property type="evidence" value="ECO:0007669"/>
    <property type="project" value="UniProtKB-UniRule"/>
</dbReference>
<dbReference type="GO" id="GO:0015979">
    <property type="term" value="P:photosynthesis"/>
    <property type="evidence" value="ECO:0007669"/>
    <property type="project" value="UniProtKB-KW"/>
</dbReference>
<dbReference type="HAMAP" id="MF_00395">
    <property type="entry name" value="Cytb6_f_PetN"/>
    <property type="match status" value="1"/>
</dbReference>
<dbReference type="InterPro" id="IPR036143">
    <property type="entry name" value="Cytochr_b6-f_cplx_su8_sf"/>
</dbReference>
<dbReference type="InterPro" id="IPR005497">
    <property type="entry name" value="Cytochrome_b6-f_cplx_su8"/>
</dbReference>
<dbReference type="Pfam" id="PF03742">
    <property type="entry name" value="PetN"/>
    <property type="match status" value="1"/>
</dbReference>
<dbReference type="SUPFAM" id="SSF103451">
    <property type="entry name" value="PetN subunit of the cytochrome b6f complex"/>
    <property type="match status" value="1"/>
</dbReference>
<feature type="chain" id="PRO_0000217125" description="Cytochrome b6-f complex subunit 8">
    <location>
        <begin position="1"/>
        <end position="29"/>
    </location>
</feature>
<feature type="transmembrane region" description="Helical" evidence="1">
    <location>
        <begin position="3"/>
        <end position="23"/>
    </location>
</feature>
<name>PETN_PLALA</name>
<organism>
    <name type="scientific">Plantago lanceolata</name>
    <name type="common">English plantain</name>
    <name type="synonym">Ribwort plantain</name>
    <dbReference type="NCBI Taxonomy" id="39414"/>
    <lineage>
        <taxon>Eukaryota</taxon>
        <taxon>Viridiplantae</taxon>
        <taxon>Streptophyta</taxon>
        <taxon>Embryophyta</taxon>
        <taxon>Tracheophyta</taxon>
        <taxon>Spermatophyta</taxon>
        <taxon>Magnoliopsida</taxon>
        <taxon>eudicotyledons</taxon>
        <taxon>Gunneridae</taxon>
        <taxon>Pentapetalae</taxon>
        <taxon>asterids</taxon>
        <taxon>lamiids</taxon>
        <taxon>Lamiales</taxon>
        <taxon>Plantaginaceae</taxon>
        <taxon>Plantagineae</taxon>
        <taxon>Plantago</taxon>
    </lineage>
</organism>
<accession>Q5IBK4</accession>
<geneLocation type="chloroplast"/>
<protein>
    <recommendedName>
        <fullName evidence="1">Cytochrome b6-f complex subunit 8</fullName>
    </recommendedName>
    <alternativeName>
        <fullName evidence="1">Cytochrome b6-f complex subunit PetN</fullName>
    </alternativeName>
    <alternativeName>
        <fullName evidence="1">Cytochrome b6-f complex subunit VIII</fullName>
    </alternativeName>
</protein>
<keyword id="KW-0150">Chloroplast</keyword>
<keyword id="KW-0249">Electron transport</keyword>
<keyword id="KW-0472">Membrane</keyword>
<keyword id="KW-0602">Photosynthesis</keyword>
<keyword id="KW-0934">Plastid</keyword>
<keyword id="KW-0793">Thylakoid</keyword>
<keyword id="KW-0812">Transmembrane</keyword>
<keyword id="KW-1133">Transmembrane helix</keyword>
<keyword id="KW-0813">Transport</keyword>
<evidence type="ECO:0000255" key="1">
    <source>
        <dbReference type="HAMAP-Rule" id="MF_00395"/>
    </source>
</evidence>
<sequence length="29" mass="3170">MDIVSLAWAALMVVFTFSLSLVVWGRSGL</sequence>
<reference key="1">
    <citation type="journal article" date="2004" name="Proc. Natl. Acad. Sci. U.S.A.">
        <title>Mitochondrial substitution rates are extraordinarily elevated and variable in a genus of flowering plants.</title>
        <authorList>
            <person name="Cho Y."/>
            <person name="Mower J.P."/>
            <person name="Qiu Y.L."/>
            <person name="Palmer J.D."/>
        </authorList>
    </citation>
    <scope>NUCLEOTIDE SEQUENCE [GENOMIC DNA]</scope>
</reference>
<gene>
    <name evidence="1" type="primary">petN</name>
</gene>
<proteinExistence type="inferred from homology"/>